<gene>
    <name evidence="1" type="primary">trpA</name>
    <name type="ordered locus">BUsg_266</name>
</gene>
<sequence length="271" mass="30685">MSRYKKMFQKLSFLKEGCFVPFVVIGDPSLEMSLKIIETLIENGADALELGIPFSDPLADGPIIQKASLRALYKKNTFLQCFELIENIRNKYLHLPIGILLYANLVYNYGIKNFYYQCFRSGLDSVLIADIPIEEYEPFYKIANQYNINSIFICPPDADDSLLSKISLYAKGYIYLLSRPGVTGIEKKTISLSNIFIEKIKKYNSLPLLQGFGIENPTQIQKSILSGTNGVICGSAIIDIIEKNLNKEKKMINEIKNFTSKLKKATKFVQS</sequence>
<protein>
    <recommendedName>
        <fullName evidence="1">Tryptophan synthase alpha chain</fullName>
        <ecNumber evidence="1">4.2.1.20</ecNumber>
    </recommendedName>
</protein>
<proteinExistence type="inferred from homology"/>
<reference key="1">
    <citation type="journal article" date="1993" name="J. Bacteriol.">
        <title>Molecular cloning and nucleotide sequence of a putative trpDC(F)BA operon in Buchnera aphidicola (endosymbiont of the aphid Schizaphis graminum).</title>
        <authorList>
            <person name="Munson M.A."/>
            <person name="Baumann P."/>
        </authorList>
    </citation>
    <scope>NUCLEOTIDE SEQUENCE [GENOMIC DNA]</scope>
</reference>
<reference key="2">
    <citation type="journal article" date="2002" name="Science">
        <title>50 million years of genomic stasis in endosymbiotic bacteria.</title>
        <authorList>
            <person name="Tamas I."/>
            <person name="Klasson L."/>
            <person name="Canbaeck B."/>
            <person name="Naeslund A.K."/>
            <person name="Eriksson A.-S."/>
            <person name="Wernegreen J.J."/>
            <person name="Sandstroem J.P."/>
            <person name="Moran N.A."/>
            <person name="Andersson S.G.E."/>
        </authorList>
    </citation>
    <scope>NUCLEOTIDE SEQUENCE [LARGE SCALE GENOMIC DNA]</scope>
    <source>
        <strain>Sg</strain>
    </source>
</reference>
<organism>
    <name type="scientific">Buchnera aphidicola subsp. Schizaphis graminum (strain Sg)</name>
    <dbReference type="NCBI Taxonomy" id="198804"/>
    <lineage>
        <taxon>Bacteria</taxon>
        <taxon>Pseudomonadati</taxon>
        <taxon>Pseudomonadota</taxon>
        <taxon>Gammaproteobacteria</taxon>
        <taxon>Enterobacterales</taxon>
        <taxon>Erwiniaceae</taxon>
        <taxon>Buchnera</taxon>
    </lineage>
</organism>
<feature type="chain" id="PRO_0000098755" description="Tryptophan synthase alpha chain">
    <location>
        <begin position="1"/>
        <end position="271"/>
    </location>
</feature>
<feature type="active site" description="Proton acceptor" evidence="1">
    <location>
        <position position="49"/>
    </location>
</feature>
<feature type="active site" description="Proton acceptor" evidence="1">
    <location>
        <position position="60"/>
    </location>
</feature>
<accession>P42389</accession>
<comment type="function">
    <text evidence="1">The alpha subunit is responsible for the aldol cleavage of indoleglycerol phosphate to indole and glyceraldehyde 3-phosphate.</text>
</comment>
<comment type="catalytic activity">
    <reaction evidence="1">
        <text>(1S,2R)-1-C-(indol-3-yl)glycerol 3-phosphate + L-serine = D-glyceraldehyde 3-phosphate + L-tryptophan + H2O</text>
        <dbReference type="Rhea" id="RHEA:10532"/>
        <dbReference type="ChEBI" id="CHEBI:15377"/>
        <dbReference type="ChEBI" id="CHEBI:33384"/>
        <dbReference type="ChEBI" id="CHEBI:57912"/>
        <dbReference type="ChEBI" id="CHEBI:58866"/>
        <dbReference type="ChEBI" id="CHEBI:59776"/>
        <dbReference type="EC" id="4.2.1.20"/>
    </reaction>
</comment>
<comment type="pathway">
    <text evidence="1">Amino-acid biosynthesis; L-tryptophan biosynthesis; L-tryptophan from chorismate: step 5/5.</text>
</comment>
<comment type="subunit">
    <text evidence="1">Tetramer of two alpha and two beta chains.</text>
</comment>
<comment type="similarity">
    <text evidence="1">Belongs to the TrpA family.</text>
</comment>
<keyword id="KW-0028">Amino-acid biosynthesis</keyword>
<keyword id="KW-0057">Aromatic amino acid biosynthesis</keyword>
<keyword id="KW-0456">Lyase</keyword>
<keyword id="KW-0822">Tryptophan biosynthesis</keyword>
<name>TRPA_BUCAP</name>
<evidence type="ECO:0000255" key="1">
    <source>
        <dbReference type="HAMAP-Rule" id="MF_00131"/>
    </source>
</evidence>
<dbReference type="EC" id="4.2.1.20" evidence="1"/>
<dbReference type="EMBL" id="Z19055">
    <property type="protein sequence ID" value="CAA79501.1"/>
    <property type="molecule type" value="Genomic_DNA"/>
</dbReference>
<dbReference type="EMBL" id="AE013218">
    <property type="protein sequence ID" value="AAM67824.1"/>
    <property type="molecule type" value="Genomic_DNA"/>
</dbReference>
<dbReference type="PIR" id="D49897">
    <property type="entry name" value="D49897"/>
</dbReference>
<dbReference type="RefSeq" id="WP_011053791.1">
    <property type="nucleotide sequence ID" value="NC_004061.1"/>
</dbReference>
<dbReference type="SMR" id="P42389"/>
<dbReference type="STRING" id="198804.BUsg_266"/>
<dbReference type="GeneID" id="93003736"/>
<dbReference type="KEGG" id="bas:BUsg_266"/>
<dbReference type="eggNOG" id="COG0159">
    <property type="taxonomic scope" value="Bacteria"/>
</dbReference>
<dbReference type="HOGENOM" id="CLU_016734_0_4_6"/>
<dbReference type="UniPathway" id="UPA00035">
    <property type="reaction ID" value="UER00044"/>
</dbReference>
<dbReference type="Proteomes" id="UP000000416">
    <property type="component" value="Chromosome"/>
</dbReference>
<dbReference type="GO" id="GO:0005829">
    <property type="term" value="C:cytosol"/>
    <property type="evidence" value="ECO:0007669"/>
    <property type="project" value="TreeGrafter"/>
</dbReference>
<dbReference type="GO" id="GO:0004834">
    <property type="term" value="F:tryptophan synthase activity"/>
    <property type="evidence" value="ECO:0007669"/>
    <property type="project" value="UniProtKB-UniRule"/>
</dbReference>
<dbReference type="CDD" id="cd04724">
    <property type="entry name" value="Tryptophan_synthase_alpha"/>
    <property type="match status" value="1"/>
</dbReference>
<dbReference type="FunFam" id="3.20.20.70:FF:000037">
    <property type="entry name" value="Tryptophan synthase alpha chain"/>
    <property type="match status" value="1"/>
</dbReference>
<dbReference type="Gene3D" id="3.20.20.70">
    <property type="entry name" value="Aldolase class I"/>
    <property type="match status" value="1"/>
</dbReference>
<dbReference type="HAMAP" id="MF_00131">
    <property type="entry name" value="Trp_synth_alpha"/>
    <property type="match status" value="1"/>
</dbReference>
<dbReference type="InterPro" id="IPR013785">
    <property type="entry name" value="Aldolase_TIM"/>
</dbReference>
<dbReference type="InterPro" id="IPR011060">
    <property type="entry name" value="RibuloseP-bd_barrel"/>
</dbReference>
<dbReference type="InterPro" id="IPR018204">
    <property type="entry name" value="Trp_synthase_alpha_AS"/>
</dbReference>
<dbReference type="InterPro" id="IPR002028">
    <property type="entry name" value="Trp_synthase_suA"/>
</dbReference>
<dbReference type="NCBIfam" id="TIGR00262">
    <property type="entry name" value="trpA"/>
    <property type="match status" value="1"/>
</dbReference>
<dbReference type="PANTHER" id="PTHR43406:SF1">
    <property type="entry name" value="TRYPTOPHAN SYNTHASE ALPHA CHAIN, CHLOROPLASTIC"/>
    <property type="match status" value="1"/>
</dbReference>
<dbReference type="PANTHER" id="PTHR43406">
    <property type="entry name" value="TRYPTOPHAN SYNTHASE, ALPHA CHAIN"/>
    <property type="match status" value="1"/>
</dbReference>
<dbReference type="Pfam" id="PF00290">
    <property type="entry name" value="Trp_syntA"/>
    <property type="match status" value="1"/>
</dbReference>
<dbReference type="SUPFAM" id="SSF51366">
    <property type="entry name" value="Ribulose-phoshate binding barrel"/>
    <property type="match status" value="1"/>
</dbReference>
<dbReference type="PROSITE" id="PS00167">
    <property type="entry name" value="TRP_SYNTHASE_ALPHA"/>
    <property type="match status" value="1"/>
</dbReference>